<gene>
    <name type="primary">TIM10</name>
    <name type="ordered locus">CNBD2620</name>
</gene>
<sequence length="102" mass="11054">MSFLFGGNNRSVEGSVDPAKIEMAVAELDMITDVFNRLVNSCHTKCISSTPLNHRYAEGDLLKGESVCIDRCTAKFFEVNKKVGERMSAMGSAAQATGSFGR</sequence>
<reference key="1">
    <citation type="journal article" date="2005" name="Science">
        <title>The genome of the basidiomycetous yeast and human pathogen Cryptococcus neoformans.</title>
        <authorList>
            <person name="Loftus B.J."/>
            <person name="Fung E."/>
            <person name="Roncaglia P."/>
            <person name="Rowley D."/>
            <person name="Amedeo P."/>
            <person name="Bruno D."/>
            <person name="Vamathevan J."/>
            <person name="Miranda M."/>
            <person name="Anderson I.J."/>
            <person name="Fraser J.A."/>
            <person name="Allen J.E."/>
            <person name="Bosdet I.E."/>
            <person name="Brent M.R."/>
            <person name="Chiu R."/>
            <person name="Doering T.L."/>
            <person name="Donlin M.J."/>
            <person name="D'Souza C.A."/>
            <person name="Fox D.S."/>
            <person name="Grinberg V."/>
            <person name="Fu J."/>
            <person name="Fukushima M."/>
            <person name="Haas B.J."/>
            <person name="Huang J.C."/>
            <person name="Janbon G."/>
            <person name="Jones S.J.M."/>
            <person name="Koo H.L."/>
            <person name="Krzywinski M.I."/>
            <person name="Kwon-Chung K.J."/>
            <person name="Lengeler K.B."/>
            <person name="Maiti R."/>
            <person name="Marra M.A."/>
            <person name="Marra R.E."/>
            <person name="Mathewson C.A."/>
            <person name="Mitchell T.G."/>
            <person name="Pertea M."/>
            <person name="Riggs F.R."/>
            <person name="Salzberg S.L."/>
            <person name="Schein J.E."/>
            <person name="Shvartsbeyn A."/>
            <person name="Shin H."/>
            <person name="Shumway M."/>
            <person name="Specht C.A."/>
            <person name="Suh B.B."/>
            <person name="Tenney A."/>
            <person name="Utterback T.R."/>
            <person name="Wickes B.L."/>
            <person name="Wortman J.R."/>
            <person name="Wye N.H."/>
            <person name="Kronstad J.W."/>
            <person name="Lodge J.K."/>
            <person name="Heitman J."/>
            <person name="Davis R.W."/>
            <person name="Fraser C.M."/>
            <person name="Hyman R.W."/>
        </authorList>
    </citation>
    <scope>NUCLEOTIDE SEQUENCE [LARGE SCALE GENOMIC DNA]</scope>
    <source>
        <strain>B-3501A</strain>
    </source>
</reference>
<accession>P0CR99</accession>
<accession>Q55U43</accession>
<accession>Q5KIA0</accession>
<evidence type="ECO:0000250" key="1"/>
<evidence type="ECO:0000305" key="2"/>
<feature type="chain" id="PRO_0000410311" description="Mitochondrial import inner membrane translocase subunit TIM10">
    <location>
        <begin position="1"/>
        <end position="102"/>
    </location>
</feature>
<feature type="short sequence motif" description="Twin CX3C motif">
    <location>
        <begin position="42"/>
        <end position="72"/>
    </location>
</feature>
<feature type="disulfide bond" evidence="1">
    <location>
        <begin position="42"/>
        <end position="72"/>
    </location>
</feature>
<feature type="disulfide bond" evidence="1">
    <location>
        <begin position="46"/>
        <end position="68"/>
    </location>
</feature>
<name>TIM10_CRYNB</name>
<proteinExistence type="inferred from homology"/>
<protein>
    <recommendedName>
        <fullName>Mitochondrial import inner membrane translocase subunit TIM10</fullName>
    </recommendedName>
</protein>
<comment type="function">
    <text evidence="1">Mitochondrial intermembrane chaperone that participates in the import and insertion of multi-pass transmembrane proteins into the mitochondrial inner membrane. Also required for the transfer of beta-barrel precursors from the TOM complex to the sorting and assembly machinery (SAM complex) of the outer membrane. Acts as a chaperone-like protein that protects the hydrophobic precursors from aggregation and guide them through the mitochondrial intermembrane space (By similarity).</text>
</comment>
<comment type="subunit">
    <text evidence="1">Heterohexamer; composed of 3 copies of TIM9 and 3 copies of TIM10, named soluble 70 kDa complex. Associates directly with the TIM22 complex, whose core is composed of TIM22 and TIM54. Interacts with the transmembrane regions of multi-pass transmembrane proteins in transit (By similarity).</text>
</comment>
<comment type="subcellular location">
    <subcellularLocation>
        <location evidence="1">Mitochondrion inner membrane</location>
        <topology evidence="1">Peripheral membrane protein</topology>
        <orientation evidence="1">Intermembrane side</orientation>
    </subcellularLocation>
</comment>
<comment type="domain">
    <text evidence="1">The twin CX3C motif contains 4 conserved Cys residues that form 2 disulfide bonds in the mitochondrial intermembrane space. However, during the transit of TIM10 from cytoplasm into mitochondrion, the Cys residues probably coordinate zinc, thereby preventing folding and allowing its transfer across mitochondrial outer membrane (By similarity).</text>
</comment>
<comment type="similarity">
    <text evidence="2">Belongs to the small Tim family.</text>
</comment>
<organism>
    <name type="scientific">Cryptococcus neoformans var. neoformans serotype D (strain B-3501A)</name>
    <name type="common">Filobasidiella neoformans</name>
    <dbReference type="NCBI Taxonomy" id="283643"/>
    <lineage>
        <taxon>Eukaryota</taxon>
        <taxon>Fungi</taxon>
        <taxon>Dikarya</taxon>
        <taxon>Basidiomycota</taxon>
        <taxon>Agaricomycotina</taxon>
        <taxon>Tremellomycetes</taxon>
        <taxon>Tremellales</taxon>
        <taxon>Cryptococcaceae</taxon>
        <taxon>Cryptococcus</taxon>
        <taxon>Cryptococcus neoformans species complex</taxon>
    </lineage>
</organism>
<dbReference type="EMBL" id="AAEY01000020">
    <property type="protein sequence ID" value="EAL21206.1"/>
    <property type="molecule type" value="Genomic_DNA"/>
</dbReference>
<dbReference type="RefSeq" id="XP_775853.1">
    <property type="nucleotide sequence ID" value="XM_770760.1"/>
</dbReference>
<dbReference type="SMR" id="P0CR99"/>
<dbReference type="EnsemblFungi" id="AAW42886">
    <property type="protein sequence ID" value="AAW42886"/>
    <property type="gene ID" value="CND03700"/>
</dbReference>
<dbReference type="GeneID" id="4935651"/>
<dbReference type="KEGG" id="cnb:CNBD2620"/>
<dbReference type="VEuPathDB" id="FungiDB:CNBD2620"/>
<dbReference type="HOGENOM" id="CLU_162151_1_0_1"/>
<dbReference type="GO" id="GO:0005743">
    <property type="term" value="C:mitochondrial inner membrane"/>
    <property type="evidence" value="ECO:0007669"/>
    <property type="project" value="UniProtKB-SubCell"/>
</dbReference>
<dbReference type="GO" id="GO:0046872">
    <property type="term" value="F:metal ion binding"/>
    <property type="evidence" value="ECO:0007669"/>
    <property type="project" value="UniProtKB-KW"/>
</dbReference>
<dbReference type="GO" id="GO:0045039">
    <property type="term" value="P:protein insertion into mitochondrial inner membrane"/>
    <property type="evidence" value="ECO:0007669"/>
    <property type="project" value="TreeGrafter"/>
</dbReference>
<dbReference type="FunFam" id="1.10.287.810:FF:000002">
    <property type="entry name" value="Mitochondrial import inner membrane translocase subunit tim10"/>
    <property type="match status" value="1"/>
</dbReference>
<dbReference type="Gene3D" id="1.10.287.810">
    <property type="entry name" value="Mitochondrial import inner membrane translocase subunit tim13 like domains"/>
    <property type="match status" value="1"/>
</dbReference>
<dbReference type="InterPro" id="IPR004217">
    <property type="entry name" value="Tim10-like"/>
</dbReference>
<dbReference type="InterPro" id="IPR035427">
    <property type="entry name" value="Tim10-like_dom_sf"/>
</dbReference>
<dbReference type="PANTHER" id="PTHR11038">
    <property type="entry name" value="MITOCHONDRIAL IMPORT INNER MEMBRANE TRANSLOCASE SUBUNIT TIM10"/>
    <property type="match status" value="1"/>
</dbReference>
<dbReference type="PANTHER" id="PTHR11038:SF16">
    <property type="entry name" value="MITOCHONDRIAL IMPORT INNER MEMBRANE TRANSLOCASE SUBUNIT TIM10"/>
    <property type="match status" value="1"/>
</dbReference>
<dbReference type="Pfam" id="PF02953">
    <property type="entry name" value="zf-Tim10_DDP"/>
    <property type="match status" value="1"/>
</dbReference>
<dbReference type="SUPFAM" id="SSF144122">
    <property type="entry name" value="Tim10-like"/>
    <property type="match status" value="1"/>
</dbReference>
<keyword id="KW-0143">Chaperone</keyword>
<keyword id="KW-1015">Disulfide bond</keyword>
<keyword id="KW-0472">Membrane</keyword>
<keyword id="KW-0479">Metal-binding</keyword>
<keyword id="KW-0496">Mitochondrion</keyword>
<keyword id="KW-0999">Mitochondrion inner membrane</keyword>
<keyword id="KW-0653">Protein transport</keyword>
<keyword id="KW-0811">Translocation</keyword>
<keyword id="KW-0813">Transport</keyword>
<keyword id="KW-0862">Zinc</keyword>